<evidence type="ECO:0000255" key="1">
    <source>
        <dbReference type="HAMAP-Rule" id="MF_01212"/>
    </source>
</evidence>
<evidence type="ECO:0000255" key="2">
    <source>
        <dbReference type="PROSITE-ProRule" id="PRU01175"/>
    </source>
</evidence>
<evidence type="ECO:0000256" key="3">
    <source>
        <dbReference type="SAM" id="MobiDB-lite"/>
    </source>
</evidence>
<comment type="similarity">
    <text evidence="1">Belongs to the dGTPase family. Type 2 subfamily.</text>
</comment>
<sequence>MSVGMAAPRAPYSCDPDRSRGRLFAEPPSRTRSPFRRDCDRVIHSTAFRRLKHKTQVFVFHEGDHYRTRLTHSLEVAQIARALARQLGLDEDLTETLALAHDLGHPPFGHAGERALNRCMADHGGFDHNAQTLRIVTAFEQRYPDFDGLNLTWESLEGIVKHNGPLQGPVPAGIAEFNARFDLELWSYASLEAQVAALADDIAYDAHDIDDGLRAGLFTVDDLKEVPLLAAIIAEIDRHYPSLDDIRRGAELVRELISYLIAAVAGEAERRIEQAKPVSPHDVRRHAGPLVAFPADVAEHEATIKAFLWQRMYRHERVMRVMRDAERIVADLFGRYQQDGATLPAGWLDGCGGEGERARRISHFIAGMTDRFALTEHHRLFDSTPDLR</sequence>
<accession>A4YV79</accession>
<protein>
    <recommendedName>
        <fullName evidence="1">Deoxyguanosinetriphosphate triphosphohydrolase-like protein</fullName>
    </recommendedName>
</protein>
<reference key="1">
    <citation type="journal article" date="2007" name="Science">
        <title>Legumes symbioses: absence of nod genes in photosynthetic bradyrhizobia.</title>
        <authorList>
            <person name="Giraud E."/>
            <person name="Moulin L."/>
            <person name="Vallenet D."/>
            <person name="Barbe V."/>
            <person name="Cytryn E."/>
            <person name="Avarre J.-C."/>
            <person name="Jaubert M."/>
            <person name="Simon D."/>
            <person name="Cartieaux F."/>
            <person name="Prin Y."/>
            <person name="Bena G."/>
            <person name="Hannibal L."/>
            <person name="Fardoux J."/>
            <person name="Kojadinovic M."/>
            <person name="Vuillet L."/>
            <person name="Lajus A."/>
            <person name="Cruveiller S."/>
            <person name="Rouy Z."/>
            <person name="Mangenot S."/>
            <person name="Segurens B."/>
            <person name="Dossat C."/>
            <person name="Franck W.L."/>
            <person name="Chang W.-S."/>
            <person name="Saunders E."/>
            <person name="Bruce D."/>
            <person name="Richardson P."/>
            <person name="Normand P."/>
            <person name="Dreyfus B."/>
            <person name="Pignol D."/>
            <person name="Stacey G."/>
            <person name="Emerich D."/>
            <person name="Vermeglio A."/>
            <person name="Medigue C."/>
            <person name="Sadowsky M."/>
        </authorList>
    </citation>
    <scope>NUCLEOTIDE SEQUENCE [LARGE SCALE GENOMIC DNA]</scope>
    <source>
        <strain>ORS 278</strain>
    </source>
</reference>
<organism>
    <name type="scientific">Bradyrhizobium sp. (strain ORS 278)</name>
    <dbReference type="NCBI Taxonomy" id="114615"/>
    <lineage>
        <taxon>Bacteria</taxon>
        <taxon>Pseudomonadati</taxon>
        <taxon>Pseudomonadota</taxon>
        <taxon>Alphaproteobacteria</taxon>
        <taxon>Hyphomicrobiales</taxon>
        <taxon>Nitrobacteraceae</taxon>
        <taxon>Bradyrhizobium</taxon>
    </lineage>
</organism>
<keyword id="KW-0378">Hydrolase</keyword>
<keyword id="KW-1185">Reference proteome</keyword>
<dbReference type="EMBL" id="CU234118">
    <property type="protein sequence ID" value="CAL77805.1"/>
    <property type="molecule type" value="Genomic_DNA"/>
</dbReference>
<dbReference type="RefSeq" id="WP_011926938.1">
    <property type="nucleotide sequence ID" value="NC_009445.1"/>
</dbReference>
<dbReference type="SMR" id="A4YV79"/>
<dbReference type="STRING" id="114615.BRADO4053"/>
<dbReference type="KEGG" id="bra:BRADO4053"/>
<dbReference type="eggNOG" id="COG0232">
    <property type="taxonomic scope" value="Bacteria"/>
</dbReference>
<dbReference type="HOGENOM" id="CLU_028163_1_0_5"/>
<dbReference type="OrthoDB" id="9803619at2"/>
<dbReference type="Proteomes" id="UP000001994">
    <property type="component" value="Chromosome"/>
</dbReference>
<dbReference type="GO" id="GO:0008832">
    <property type="term" value="F:dGTPase activity"/>
    <property type="evidence" value="ECO:0007669"/>
    <property type="project" value="TreeGrafter"/>
</dbReference>
<dbReference type="GO" id="GO:0006203">
    <property type="term" value="P:dGTP catabolic process"/>
    <property type="evidence" value="ECO:0007669"/>
    <property type="project" value="TreeGrafter"/>
</dbReference>
<dbReference type="CDD" id="cd00077">
    <property type="entry name" value="HDc"/>
    <property type="match status" value="1"/>
</dbReference>
<dbReference type="Gene3D" id="1.10.3210.10">
    <property type="entry name" value="Hypothetical protein af1432"/>
    <property type="match status" value="1"/>
</dbReference>
<dbReference type="HAMAP" id="MF_01212">
    <property type="entry name" value="dGTPase_type2"/>
    <property type="match status" value="1"/>
</dbReference>
<dbReference type="InterPro" id="IPR006261">
    <property type="entry name" value="dGTPase"/>
</dbReference>
<dbReference type="InterPro" id="IPR050135">
    <property type="entry name" value="dGTPase-like"/>
</dbReference>
<dbReference type="InterPro" id="IPR023023">
    <property type="entry name" value="dNTPase_2"/>
</dbReference>
<dbReference type="InterPro" id="IPR003607">
    <property type="entry name" value="HD/PDEase_dom"/>
</dbReference>
<dbReference type="InterPro" id="IPR006674">
    <property type="entry name" value="HD_domain"/>
</dbReference>
<dbReference type="InterPro" id="IPR006675">
    <property type="entry name" value="HDIG_dom"/>
</dbReference>
<dbReference type="InterPro" id="IPR026875">
    <property type="entry name" value="PHydrolase_assoc_dom"/>
</dbReference>
<dbReference type="NCBIfam" id="TIGR01353">
    <property type="entry name" value="dGTP_triPase"/>
    <property type="match status" value="1"/>
</dbReference>
<dbReference type="NCBIfam" id="TIGR00277">
    <property type="entry name" value="HDIG"/>
    <property type="match status" value="1"/>
</dbReference>
<dbReference type="NCBIfam" id="NF002326">
    <property type="entry name" value="PRK01286.1-1"/>
    <property type="match status" value="1"/>
</dbReference>
<dbReference type="NCBIfam" id="NF002328">
    <property type="entry name" value="PRK01286.1-3"/>
    <property type="match status" value="1"/>
</dbReference>
<dbReference type="PANTHER" id="PTHR11373:SF43">
    <property type="entry name" value="DEOXYGUANOSINETRIPHOSPHATE TRIPHOSPHOHYDROLASE-LIKE PROTEIN"/>
    <property type="match status" value="1"/>
</dbReference>
<dbReference type="PANTHER" id="PTHR11373">
    <property type="entry name" value="DEOXYNUCLEOSIDE TRIPHOSPHATE TRIPHOSPHOHYDROLASE"/>
    <property type="match status" value="1"/>
</dbReference>
<dbReference type="Pfam" id="PF01966">
    <property type="entry name" value="HD"/>
    <property type="match status" value="1"/>
</dbReference>
<dbReference type="Pfam" id="PF13286">
    <property type="entry name" value="HD_assoc"/>
    <property type="match status" value="1"/>
</dbReference>
<dbReference type="SMART" id="SM00471">
    <property type="entry name" value="HDc"/>
    <property type="match status" value="1"/>
</dbReference>
<dbReference type="SUPFAM" id="SSF109604">
    <property type="entry name" value="HD-domain/PDEase-like"/>
    <property type="match status" value="1"/>
</dbReference>
<dbReference type="PROSITE" id="PS51831">
    <property type="entry name" value="HD"/>
    <property type="match status" value="1"/>
</dbReference>
<name>DGTL1_BRASO</name>
<proteinExistence type="inferred from homology"/>
<feature type="chain" id="PRO_1000066412" description="Deoxyguanosinetriphosphate triphosphohydrolase-like protein">
    <location>
        <begin position="1"/>
        <end position="388"/>
    </location>
</feature>
<feature type="domain" description="HD" evidence="2">
    <location>
        <begin position="69"/>
        <end position="205"/>
    </location>
</feature>
<feature type="region of interest" description="Disordered" evidence="3">
    <location>
        <begin position="1"/>
        <end position="32"/>
    </location>
</feature>
<gene>
    <name type="ordered locus">BRADO4053</name>
</gene>